<sequence>MLGRLYIQNFFFIRDVEVEFERGLNVITGETGTGKSMTISAIEFLMGKQGDYPEGTAVELELLGEEEIILRREVKKGRSRYYVNGKGASKSTVLELLEGKISLQGQNEFINLFREDFQRKLLDTFANLNDKVKELEKVYNSLRKKEQELFEFLRKKEELIQKKDYLEFRVREVEEIGISSEEYEELKNKANLINNLEKVKKAVGESLYKLLEGENSVYEILGEIRKNLAKVESYSGKFSELIEKIANLEEEVYELYNSLKEEMPEISEEEVNEINEKLFRIQRLEEKYKKSFPEILKEVEEIKEELSNLNSVDFKEEELREEVEKLREEYDKLAEEVSRDRRKKAEDLEERIEEILKELNLERAKLKVEIKESEPTKYGKDKIEFLFSSYGKDFKPLEEVASGGELSRLFLALSLILPASETYVFDEVDAGISGETSFKVAKFLKELSKKMQVIVITHSAPLCAAGDKNFKTEKKFLGDIPYIVVRELSEEEKVEEVARLMGMKSEKTLEGAKELVEAFK</sequence>
<organism>
    <name type="scientific">Aquifex aeolicus (strain VF5)</name>
    <dbReference type="NCBI Taxonomy" id="224324"/>
    <lineage>
        <taxon>Bacteria</taxon>
        <taxon>Pseudomonadati</taxon>
        <taxon>Aquificota</taxon>
        <taxon>Aquificia</taxon>
        <taxon>Aquificales</taxon>
        <taxon>Aquificaceae</taxon>
        <taxon>Aquifex</taxon>
    </lineage>
</organism>
<accession>O66834</accession>
<name>RECN_AQUAE</name>
<reference key="1">
    <citation type="journal article" date="1998" name="Nature">
        <title>The complete genome of the hyperthermophilic bacterium Aquifex aeolicus.</title>
        <authorList>
            <person name="Deckert G."/>
            <person name="Warren P.V."/>
            <person name="Gaasterland T."/>
            <person name="Young W.G."/>
            <person name="Lenox A.L."/>
            <person name="Graham D.E."/>
            <person name="Overbeek R."/>
            <person name="Snead M.A."/>
            <person name="Keller M."/>
            <person name="Aujay M."/>
            <person name="Huber R."/>
            <person name="Feldman R.A."/>
            <person name="Short J.M."/>
            <person name="Olsen G.J."/>
            <person name="Swanson R.V."/>
        </authorList>
    </citation>
    <scope>NUCLEOTIDE SEQUENCE [LARGE SCALE GENOMIC DNA]</scope>
    <source>
        <strain>VF5</strain>
    </source>
</reference>
<comment type="function">
    <text evidence="1">May be involved in recombinational repair of damaged DNA.</text>
</comment>
<comment type="similarity">
    <text evidence="3">Belongs to the RecN family.</text>
</comment>
<keyword id="KW-0067">ATP-binding</keyword>
<keyword id="KW-0227">DNA damage</keyword>
<keyword id="KW-0234">DNA repair</keyword>
<keyword id="KW-0547">Nucleotide-binding</keyword>
<keyword id="KW-1185">Reference proteome</keyword>
<gene>
    <name type="primary">recN</name>
    <name type="ordered locus">aq_561</name>
</gene>
<protein>
    <recommendedName>
        <fullName>DNA repair protein RecN</fullName>
    </recommendedName>
    <alternativeName>
        <fullName>Recombination protein N</fullName>
    </alternativeName>
</protein>
<dbReference type="EMBL" id="AE000657">
    <property type="protein sequence ID" value="AAC06789.1"/>
    <property type="molecule type" value="Genomic_DNA"/>
</dbReference>
<dbReference type="PIR" id="F70350">
    <property type="entry name" value="F70350"/>
</dbReference>
<dbReference type="RefSeq" id="NP_213394.1">
    <property type="nucleotide sequence ID" value="NC_000918.1"/>
</dbReference>
<dbReference type="RefSeq" id="WP_010880332.1">
    <property type="nucleotide sequence ID" value="NC_000918.1"/>
</dbReference>
<dbReference type="SMR" id="O66834"/>
<dbReference type="FunCoup" id="O66834">
    <property type="interactions" value="388"/>
</dbReference>
<dbReference type="STRING" id="224324.aq_561"/>
<dbReference type="EnsemblBacteria" id="AAC06789">
    <property type="protein sequence ID" value="AAC06789"/>
    <property type="gene ID" value="aq_561"/>
</dbReference>
<dbReference type="KEGG" id="aae:aq_561"/>
<dbReference type="PATRIC" id="fig|224324.8.peg.460"/>
<dbReference type="eggNOG" id="COG0497">
    <property type="taxonomic scope" value="Bacteria"/>
</dbReference>
<dbReference type="HOGENOM" id="CLU_018297_3_1_0"/>
<dbReference type="InParanoid" id="O66834"/>
<dbReference type="OrthoDB" id="9806954at2"/>
<dbReference type="Proteomes" id="UP000000798">
    <property type="component" value="Chromosome"/>
</dbReference>
<dbReference type="GO" id="GO:0043590">
    <property type="term" value="C:bacterial nucleoid"/>
    <property type="evidence" value="ECO:0000318"/>
    <property type="project" value="GO_Central"/>
</dbReference>
<dbReference type="GO" id="GO:0005524">
    <property type="term" value="F:ATP binding"/>
    <property type="evidence" value="ECO:0007669"/>
    <property type="project" value="UniProtKB-KW"/>
</dbReference>
<dbReference type="GO" id="GO:0016887">
    <property type="term" value="F:ATP hydrolysis activity"/>
    <property type="evidence" value="ECO:0007669"/>
    <property type="project" value="InterPro"/>
</dbReference>
<dbReference type="GO" id="GO:0006310">
    <property type="term" value="P:DNA recombination"/>
    <property type="evidence" value="ECO:0007669"/>
    <property type="project" value="InterPro"/>
</dbReference>
<dbReference type="GO" id="GO:0006302">
    <property type="term" value="P:double-strand break repair"/>
    <property type="evidence" value="ECO:0007669"/>
    <property type="project" value="InterPro"/>
</dbReference>
<dbReference type="GO" id="GO:0009432">
    <property type="term" value="P:SOS response"/>
    <property type="evidence" value="ECO:0000318"/>
    <property type="project" value="GO_Central"/>
</dbReference>
<dbReference type="FunFam" id="3.40.50.300:FF:005423">
    <property type="entry name" value="DNA repair protein RecN"/>
    <property type="match status" value="1"/>
</dbReference>
<dbReference type="Gene3D" id="3.40.50.300">
    <property type="entry name" value="P-loop containing nucleotide triphosphate hydrolases"/>
    <property type="match status" value="2"/>
</dbReference>
<dbReference type="InterPro" id="IPR004604">
    <property type="entry name" value="DNA_recomb/repair_RecN"/>
</dbReference>
<dbReference type="InterPro" id="IPR027417">
    <property type="entry name" value="P-loop_NTPase"/>
</dbReference>
<dbReference type="InterPro" id="IPR038729">
    <property type="entry name" value="Rad50/SbcC_AAA"/>
</dbReference>
<dbReference type="NCBIfam" id="TIGR00634">
    <property type="entry name" value="recN"/>
    <property type="match status" value="1"/>
</dbReference>
<dbReference type="PANTHER" id="PTHR11059">
    <property type="entry name" value="DNA REPAIR PROTEIN RECN"/>
    <property type="match status" value="1"/>
</dbReference>
<dbReference type="PANTHER" id="PTHR11059:SF0">
    <property type="entry name" value="DNA REPAIR PROTEIN RECN"/>
    <property type="match status" value="1"/>
</dbReference>
<dbReference type="Pfam" id="PF13476">
    <property type="entry name" value="AAA_23"/>
    <property type="match status" value="1"/>
</dbReference>
<dbReference type="PIRSF" id="PIRSF003128">
    <property type="entry name" value="RecN"/>
    <property type="match status" value="1"/>
</dbReference>
<dbReference type="SUPFAM" id="SSF52540">
    <property type="entry name" value="P-loop containing nucleoside triphosphate hydrolases"/>
    <property type="match status" value="1"/>
</dbReference>
<proteinExistence type="inferred from homology"/>
<feature type="chain" id="PRO_0000188012" description="DNA repair protein RecN">
    <location>
        <begin position="1"/>
        <end position="520"/>
    </location>
</feature>
<feature type="binding site" evidence="2">
    <location>
        <begin position="29"/>
        <end position="36"/>
    </location>
    <ligand>
        <name>ATP</name>
        <dbReference type="ChEBI" id="CHEBI:30616"/>
    </ligand>
</feature>
<evidence type="ECO:0000250" key="1"/>
<evidence type="ECO:0000255" key="2"/>
<evidence type="ECO:0000305" key="3"/>